<sequence>MKNMGQMMKQMQKMQKQMMKAQEELKEKTVEATAGGGMVTVVASGDKRILDVRISEDVVDPDDVEMLQDLILAATNEALKKVDELVEQDMGKFTKGLNMPGMF</sequence>
<keyword id="KW-0963">Cytoplasm</keyword>
<keyword id="KW-0238">DNA-binding</keyword>
<keyword id="KW-1185">Reference proteome</keyword>
<gene>
    <name type="ordered locus">BH0035</name>
</gene>
<accession>Q9JWQ5</accession>
<reference key="1">
    <citation type="journal article" date="1999" name="Biosci. Biotechnol. Biochem.">
        <title>Replication origin region of the chromosome of alkaliphilic Bacillus halodurans C-125.</title>
        <authorList>
            <person name="Takami H."/>
            <person name="Masui N."/>
            <person name="Nakasone K."/>
            <person name="Horikoshi K."/>
        </authorList>
    </citation>
    <scope>NUCLEOTIDE SEQUENCE [GENOMIC DNA]</scope>
    <source>
        <strain>ATCC BAA-125 / DSM 18197 / FERM 7344 / JCM 9153 / C-125</strain>
    </source>
</reference>
<reference key="2">
    <citation type="journal article" date="2000" name="Nucleic Acids Res.">
        <title>Complete genome sequence of the alkaliphilic bacterium Bacillus halodurans and genomic sequence comparison with Bacillus subtilis.</title>
        <authorList>
            <person name="Takami H."/>
            <person name="Nakasone K."/>
            <person name="Takaki Y."/>
            <person name="Maeno G."/>
            <person name="Sasaki R."/>
            <person name="Masui N."/>
            <person name="Fuji F."/>
            <person name="Hirama C."/>
            <person name="Nakamura Y."/>
            <person name="Ogasawara N."/>
            <person name="Kuhara S."/>
            <person name="Horikoshi K."/>
        </authorList>
    </citation>
    <scope>NUCLEOTIDE SEQUENCE [LARGE SCALE GENOMIC DNA]</scope>
    <source>
        <strain>ATCC BAA-125 / DSM 18197 / FERM 7344 / JCM 9153 / C-125</strain>
    </source>
</reference>
<proteinExistence type="inferred from homology"/>
<comment type="function">
    <text evidence="1">Binds to DNA and alters its conformation. May be involved in regulation of gene expression, nucleoid organization and DNA protection.</text>
</comment>
<comment type="subunit">
    <text evidence="1">Homodimer.</text>
</comment>
<comment type="subcellular location">
    <subcellularLocation>
        <location evidence="1">Cytoplasm</location>
        <location evidence="1">Nucleoid</location>
    </subcellularLocation>
</comment>
<comment type="similarity">
    <text evidence="1">Belongs to the YbaB/EbfC family.</text>
</comment>
<evidence type="ECO:0000255" key="1">
    <source>
        <dbReference type="HAMAP-Rule" id="MF_00274"/>
    </source>
</evidence>
<evidence type="ECO:0000256" key="2">
    <source>
        <dbReference type="SAM" id="MobiDB-lite"/>
    </source>
</evidence>
<protein>
    <recommendedName>
        <fullName evidence="1">Nucleoid-associated protein BH0035</fullName>
    </recommendedName>
</protein>
<organism>
    <name type="scientific">Halalkalibacterium halodurans (strain ATCC BAA-125 / DSM 18197 / FERM 7344 / JCM 9153 / C-125)</name>
    <name type="common">Bacillus halodurans</name>
    <dbReference type="NCBI Taxonomy" id="272558"/>
    <lineage>
        <taxon>Bacteria</taxon>
        <taxon>Bacillati</taxon>
        <taxon>Bacillota</taxon>
        <taxon>Bacilli</taxon>
        <taxon>Bacillales</taxon>
        <taxon>Bacillaceae</taxon>
        <taxon>Halalkalibacterium (ex Joshi et al. 2022)</taxon>
    </lineage>
</organism>
<name>Y035_HALH5</name>
<dbReference type="EMBL" id="BA000004">
    <property type="protein sequence ID" value="BAB03754.1"/>
    <property type="molecule type" value="Genomic_DNA"/>
</dbReference>
<dbReference type="EMBL" id="AB031210">
    <property type="protein sequence ID" value="BAA90837.1"/>
    <property type="molecule type" value="Genomic_DNA"/>
</dbReference>
<dbReference type="PIR" id="C83654">
    <property type="entry name" value="C83654"/>
</dbReference>
<dbReference type="RefSeq" id="WP_010896219.1">
    <property type="nucleotide sequence ID" value="NC_002570.2"/>
</dbReference>
<dbReference type="SMR" id="Q9JWQ5"/>
<dbReference type="STRING" id="272558.gene:10725854"/>
<dbReference type="KEGG" id="bha:BH0035"/>
<dbReference type="eggNOG" id="COG0718">
    <property type="taxonomic scope" value="Bacteria"/>
</dbReference>
<dbReference type="HOGENOM" id="CLU_140930_1_0_9"/>
<dbReference type="OrthoDB" id="9795263at2"/>
<dbReference type="Proteomes" id="UP000001258">
    <property type="component" value="Chromosome"/>
</dbReference>
<dbReference type="GO" id="GO:0043590">
    <property type="term" value="C:bacterial nucleoid"/>
    <property type="evidence" value="ECO:0007669"/>
    <property type="project" value="UniProtKB-UniRule"/>
</dbReference>
<dbReference type="GO" id="GO:0005829">
    <property type="term" value="C:cytosol"/>
    <property type="evidence" value="ECO:0007669"/>
    <property type="project" value="TreeGrafter"/>
</dbReference>
<dbReference type="GO" id="GO:0003677">
    <property type="term" value="F:DNA binding"/>
    <property type="evidence" value="ECO:0007669"/>
    <property type="project" value="UniProtKB-UniRule"/>
</dbReference>
<dbReference type="FunFam" id="3.30.1310.10:FF:000002">
    <property type="entry name" value="Nucleoid-associated protein IKC_06587"/>
    <property type="match status" value="1"/>
</dbReference>
<dbReference type="Gene3D" id="3.30.1310.10">
    <property type="entry name" value="Nucleoid-associated protein YbaB-like domain"/>
    <property type="match status" value="1"/>
</dbReference>
<dbReference type="HAMAP" id="MF_00274">
    <property type="entry name" value="DNA_YbaB_EbfC"/>
    <property type="match status" value="1"/>
</dbReference>
<dbReference type="InterPro" id="IPR036894">
    <property type="entry name" value="YbaB-like_sf"/>
</dbReference>
<dbReference type="InterPro" id="IPR004401">
    <property type="entry name" value="YbaB/EbfC"/>
</dbReference>
<dbReference type="NCBIfam" id="TIGR00103">
    <property type="entry name" value="DNA_YbaB_EbfC"/>
    <property type="match status" value="1"/>
</dbReference>
<dbReference type="PANTHER" id="PTHR33449">
    <property type="entry name" value="NUCLEOID-ASSOCIATED PROTEIN YBAB"/>
    <property type="match status" value="1"/>
</dbReference>
<dbReference type="PANTHER" id="PTHR33449:SF1">
    <property type="entry name" value="NUCLEOID-ASSOCIATED PROTEIN YBAB"/>
    <property type="match status" value="1"/>
</dbReference>
<dbReference type="Pfam" id="PF02575">
    <property type="entry name" value="YbaB_DNA_bd"/>
    <property type="match status" value="1"/>
</dbReference>
<dbReference type="PIRSF" id="PIRSF004555">
    <property type="entry name" value="UCP004555"/>
    <property type="match status" value="1"/>
</dbReference>
<dbReference type="SUPFAM" id="SSF82607">
    <property type="entry name" value="YbaB-like"/>
    <property type="match status" value="1"/>
</dbReference>
<feature type="chain" id="PRO_0000170364" description="Nucleoid-associated protein BH0035">
    <location>
        <begin position="1"/>
        <end position="103"/>
    </location>
</feature>
<feature type="region of interest" description="Disordered" evidence="2">
    <location>
        <begin position="1"/>
        <end position="29"/>
    </location>
</feature>
<feature type="compositionally biased region" description="Low complexity" evidence="2">
    <location>
        <begin position="1"/>
        <end position="20"/>
    </location>
</feature>